<name>HAL3_ORYSJ</name>
<feature type="chain" id="PRO_0000429408" description="Phosphopantothenoylcysteine decarboxylase">
    <location>
        <begin position="1"/>
        <end position="220"/>
    </location>
</feature>
<feature type="active site" description="Proton donor" evidence="1">
    <location>
        <position position="91"/>
    </location>
</feature>
<feature type="active site" description="Proton donor" evidence="7 8">
    <location>
        <position position="176"/>
    </location>
</feature>
<feature type="binding site" evidence="1">
    <location>
        <begin position="29"/>
        <end position="31"/>
    </location>
    <ligand>
        <name>FMN</name>
        <dbReference type="ChEBI" id="CHEBI:58210"/>
    </ligand>
</feature>
<feature type="binding site" evidence="1">
    <location>
        <begin position="54"/>
        <end position="56"/>
    </location>
    <ligand>
        <name>FMN</name>
        <dbReference type="ChEBI" id="CHEBI:58210"/>
    </ligand>
</feature>
<feature type="binding site" evidence="1">
    <location>
        <begin position="107"/>
        <end position="110"/>
    </location>
    <ligand>
        <name>FMN</name>
        <dbReference type="ChEBI" id="CHEBI:58210"/>
    </ligand>
</feature>
<feature type="binding site" evidence="1">
    <location>
        <position position="141"/>
    </location>
    <ligand>
        <name>FMN</name>
        <dbReference type="ChEBI" id="CHEBI:58210"/>
    </ligand>
</feature>
<feature type="binding site" evidence="1">
    <location>
        <position position="143"/>
    </location>
    <ligand>
        <name>N-[(R)-4-phosphopantothenoyl]-L-cysteine</name>
        <dbReference type="ChEBI" id="CHEBI:59458"/>
    </ligand>
</feature>
<feature type="binding site" evidence="1">
    <location>
        <position position="173"/>
    </location>
    <ligand>
        <name>N-[(R)-4-phosphopantothenoyl]-L-cysteine</name>
        <dbReference type="ChEBI" id="CHEBI:59458"/>
    </ligand>
</feature>
<feature type="binding site" evidence="1">
    <location>
        <position position="175"/>
    </location>
    <ligand>
        <name>N-[(R)-4-phosphopantothenoyl]-L-cysteine</name>
        <dbReference type="ChEBI" id="CHEBI:59458"/>
    </ligand>
</feature>
<feature type="binding site" evidence="1">
    <location>
        <position position="184"/>
    </location>
    <ligand>
        <name>N-[(R)-4-phosphopantothenoyl]-L-cysteine</name>
        <dbReference type="ChEBI" id="CHEBI:59458"/>
    </ligand>
</feature>
<feature type="site" description="Important for catalytic activity" evidence="1">
    <location>
        <position position="176"/>
    </location>
</feature>
<feature type="mutagenesis site" description="Loss of FMN binding and unable to form homotrimer." evidence="3">
    <original>SANT</original>
    <variation>PPYP</variation>
    <location>
        <begin position="107"/>
        <end position="110"/>
    </location>
</feature>
<feature type="mutagenesis site" description="No effect on the activity." evidence="2">
    <original>M</original>
    <variation>L</variation>
    <location>
        <position position="146"/>
    </location>
</feature>
<feature type="mutagenesis site" description="Loss of activity." evidence="2 3">
    <original>C</original>
    <variation>S</variation>
    <location>
        <position position="176"/>
    </location>
</feature>
<feature type="mutagenesis site" description="No effect on the activity." evidence="2">
    <original>D</original>
    <variation>N</variation>
    <location>
        <position position="178"/>
    </location>
</feature>
<feature type="mutagenesis site" description="Reduces activity." evidence="2">
    <original>G</original>
    <variation>A</variation>
    <location>
        <position position="180"/>
    </location>
</feature>
<evidence type="ECO:0000250" key="1">
    <source>
        <dbReference type="UniProtKB" id="Q9SWE5"/>
    </source>
</evidence>
<evidence type="ECO:0000269" key="2">
    <source>
    </source>
</evidence>
<evidence type="ECO:0000269" key="3">
    <source>
    </source>
</evidence>
<evidence type="ECO:0000269" key="4">
    <source>
    </source>
</evidence>
<evidence type="ECO:0000303" key="5">
    <source>
    </source>
</evidence>
<evidence type="ECO:0000305" key="6"/>
<evidence type="ECO:0000305" key="7">
    <source>
    </source>
</evidence>
<evidence type="ECO:0000305" key="8">
    <source>
    </source>
</evidence>
<evidence type="ECO:0000312" key="9">
    <source>
        <dbReference type="EMBL" id="BAD35576.1"/>
    </source>
</evidence>
<evidence type="ECO:0000312" key="10">
    <source>
        <dbReference type="EMBL" id="BAD36646.1"/>
    </source>
</evidence>
<evidence type="ECO:0000312" key="11">
    <source>
        <dbReference type="EMBL" id="BAS96646.1"/>
    </source>
</evidence>
<evidence type="ECO:0000312" key="12">
    <source>
        <dbReference type="EMBL" id="EEE65262.1"/>
    </source>
</evidence>
<proteinExistence type="evidence at protein level"/>
<protein>
    <recommendedName>
        <fullName evidence="5">Phosphopantothenoylcysteine decarboxylase</fullName>
        <shortName evidence="5">PPCDC</shortName>
        <ecNumber evidence="3">4.1.1.36</ecNumber>
    </recommendedName>
    <alternativeName>
        <fullName evidence="5">Halotolerance protein HAL3</fullName>
        <shortName evidence="5">OsHAL3</shortName>
    </alternativeName>
</protein>
<keyword id="KW-0173">Coenzyme A biosynthesis</keyword>
<keyword id="KW-0210">Decarboxylase</keyword>
<keyword id="KW-0285">Flavoprotein</keyword>
<keyword id="KW-0288">FMN</keyword>
<keyword id="KW-0341">Growth regulation</keyword>
<keyword id="KW-0456">Lyase</keyword>
<keyword id="KW-0539">Nucleus</keyword>
<keyword id="KW-1185">Reference proteome</keyword>
<keyword id="KW-0346">Stress response</keyword>
<dbReference type="EC" id="4.1.1.36" evidence="3"/>
<dbReference type="EMBL" id="AP003946">
    <property type="protein sequence ID" value="BAD35576.1"/>
    <property type="molecule type" value="Genomic_DNA"/>
</dbReference>
<dbReference type="EMBL" id="AP006056">
    <property type="protein sequence ID" value="BAD36646.1"/>
    <property type="molecule type" value="Genomic_DNA"/>
</dbReference>
<dbReference type="EMBL" id="AP008212">
    <property type="protein sequence ID" value="BAF18982.1"/>
    <property type="molecule type" value="Genomic_DNA"/>
</dbReference>
<dbReference type="EMBL" id="AP014962">
    <property type="protein sequence ID" value="BAS96646.1"/>
    <property type="molecule type" value="Genomic_DNA"/>
</dbReference>
<dbReference type="EMBL" id="CM000143">
    <property type="protein sequence ID" value="EEE65262.1"/>
    <property type="molecule type" value="Genomic_DNA"/>
</dbReference>
<dbReference type="EMBL" id="AK060939">
    <property type="protein sequence ID" value="BAG87631.1"/>
    <property type="molecule type" value="mRNA"/>
</dbReference>
<dbReference type="EMBL" id="AK064613">
    <property type="protein sequence ID" value="BAG89128.1"/>
    <property type="molecule type" value="mRNA"/>
</dbReference>
<dbReference type="EMBL" id="AK100138">
    <property type="protein sequence ID" value="BAG94463.1"/>
    <property type="molecule type" value="mRNA"/>
</dbReference>
<dbReference type="RefSeq" id="XP_015641201.1">
    <property type="nucleotide sequence ID" value="XM_015785715.1"/>
</dbReference>
<dbReference type="RefSeq" id="XP_015641202.1">
    <property type="nucleotide sequence ID" value="XM_015785716.1"/>
</dbReference>
<dbReference type="RefSeq" id="XP_015641203.1">
    <property type="nucleotide sequence ID" value="XM_015785717.1"/>
</dbReference>
<dbReference type="SMR" id="Q69K55"/>
<dbReference type="FunCoup" id="Q69K55">
    <property type="interactions" value="2305"/>
</dbReference>
<dbReference type="STRING" id="39947.Q69K55"/>
<dbReference type="PaxDb" id="39947-Q69K55"/>
<dbReference type="EnsemblPlants" id="Os06t0199500-01">
    <property type="protein sequence ID" value="Os06t0199500-01"/>
    <property type="gene ID" value="Os06g0199500"/>
</dbReference>
<dbReference type="EnsemblPlants" id="Os06t0199500-02">
    <property type="protein sequence ID" value="Os06t0199500-02"/>
    <property type="gene ID" value="Os06g0199500"/>
</dbReference>
<dbReference type="Gramene" id="Os06t0199500-01">
    <property type="protein sequence ID" value="Os06t0199500-01"/>
    <property type="gene ID" value="Os06g0199500"/>
</dbReference>
<dbReference type="Gramene" id="Os06t0199500-02">
    <property type="protein sequence ID" value="Os06t0199500-02"/>
    <property type="gene ID" value="Os06g0199500"/>
</dbReference>
<dbReference type="KEGG" id="dosa:Os06g0199500"/>
<dbReference type="eggNOG" id="KOG0672">
    <property type="taxonomic scope" value="Eukaryota"/>
</dbReference>
<dbReference type="HOGENOM" id="CLU_033319_3_2_1"/>
<dbReference type="InParanoid" id="Q69K55"/>
<dbReference type="OMA" id="KGLACGD"/>
<dbReference type="OrthoDB" id="1532798at2759"/>
<dbReference type="UniPathway" id="UPA00241">
    <property type="reaction ID" value="UER00354"/>
</dbReference>
<dbReference type="Proteomes" id="UP000000763">
    <property type="component" value="Chromosome 6"/>
</dbReference>
<dbReference type="Proteomes" id="UP000007752">
    <property type="component" value="Chromosome 6"/>
</dbReference>
<dbReference type="Proteomes" id="UP000059680">
    <property type="component" value="Chromosome 6"/>
</dbReference>
<dbReference type="GO" id="GO:0005634">
    <property type="term" value="C:nucleus"/>
    <property type="evidence" value="ECO:0007669"/>
    <property type="project" value="UniProtKB-SubCell"/>
</dbReference>
<dbReference type="GO" id="GO:0071513">
    <property type="term" value="C:phosphopantothenoylcysteine decarboxylase complex"/>
    <property type="evidence" value="ECO:0000318"/>
    <property type="project" value="GO_Central"/>
</dbReference>
<dbReference type="GO" id="GO:0010181">
    <property type="term" value="F:FMN binding"/>
    <property type="evidence" value="ECO:0000314"/>
    <property type="project" value="UniProtKB"/>
</dbReference>
<dbReference type="GO" id="GO:0004633">
    <property type="term" value="F:phosphopantothenoylcysteine decarboxylase activity"/>
    <property type="evidence" value="ECO:0000314"/>
    <property type="project" value="UniProtKB"/>
</dbReference>
<dbReference type="GO" id="GO:0015937">
    <property type="term" value="P:coenzyme A biosynthetic process"/>
    <property type="evidence" value="ECO:0000318"/>
    <property type="project" value="GO_Central"/>
</dbReference>
<dbReference type="GO" id="GO:0070207">
    <property type="term" value="P:protein homotrimerization"/>
    <property type="evidence" value="ECO:0000314"/>
    <property type="project" value="UniProtKB"/>
</dbReference>
<dbReference type="GO" id="GO:0001558">
    <property type="term" value="P:regulation of cell growth"/>
    <property type="evidence" value="ECO:0000315"/>
    <property type="project" value="UniProtKB"/>
</dbReference>
<dbReference type="GO" id="GO:0009651">
    <property type="term" value="P:response to salt stress"/>
    <property type="evidence" value="ECO:0000315"/>
    <property type="project" value="UniProtKB"/>
</dbReference>
<dbReference type="FunFam" id="3.40.50.1950:FF:000004">
    <property type="entry name" value="Phosphopantothenoylcysteine decarboxylase"/>
    <property type="match status" value="1"/>
</dbReference>
<dbReference type="Gene3D" id="3.40.50.1950">
    <property type="entry name" value="Flavin prenyltransferase-like"/>
    <property type="match status" value="1"/>
</dbReference>
<dbReference type="InterPro" id="IPR036551">
    <property type="entry name" value="Flavin_trans-like"/>
</dbReference>
<dbReference type="InterPro" id="IPR003382">
    <property type="entry name" value="Flavoprotein"/>
</dbReference>
<dbReference type="PANTHER" id="PTHR14359">
    <property type="entry name" value="HOMO-OLIGOMERIC FLAVIN CONTAINING CYS DECARBOXYLASE FAMILY"/>
    <property type="match status" value="1"/>
</dbReference>
<dbReference type="PANTHER" id="PTHR14359:SF6">
    <property type="entry name" value="PHOSPHOPANTOTHENOYLCYSTEINE DECARBOXYLASE"/>
    <property type="match status" value="1"/>
</dbReference>
<dbReference type="Pfam" id="PF02441">
    <property type="entry name" value="Flavoprotein"/>
    <property type="match status" value="1"/>
</dbReference>
<dbReference type="SUPFAM" id="SSF52507">
    <property type="entry name" value="Homo-oligomeric flavin-containing Cys decarboxylases, HFCD"/>
    <property type="match status" value="1"/>
</dbReference>
<organism>
    <name type="scientific">Oryza sativa subsp. japonica</name>
    <name type="common">Rice</name>
    <dbReference type="NCBI Taxonomy" id="39947"/>
    <lineage>
        <taxon>Eukaryota</taxon>
        <taxon>Viridiplantae</taxon>
        <taxon>Streptophyta</taxon>
        <taxon>Embryophyta</taxon>
        <taxon>Tracheophyta</taxon>
        <taxon>Spermatophyta</taxon>
        <taxon>Magnoliopsida</taxon>
        <taxon>Liliopsida</taxon>
        <taxon>Poales</taxon>
        <taxon>Poaceae</taxon>
        <taxon>BOP clade</taxon>
        <taxon>Oryzoideae</taxon>
        <taxon>Oryzeae</taxon>
        <taxon>Oryzinae</taxon>
        <taxon>Oryza</taxon>
        <taxon>Oryza sativa</taxon>
    </lineage>
</organism>
<sequence length="220" mass="24084">MTTSESVQETLGLDFPHPSKPRVLLAASGSVAAIKFESLCRSFSEWAEVRAVATKASLHFIDRTSLPSNIILYTDDDEWSTWKKIGDEVLHIELRKWADIMVIAPLSANTLAKIAGGLCDNLLTCIVRAWDYSKPLFVAPAMNTFMWNNPFTSRHLETINLLGISLVPPITKRLACGDYGNGAMAEPSVIDSTVRLACKRQPLNTNSSPVVPAGRNLPSS</sequence>
<accession>Q69K55</accession>
<accession>A0A0P0WU76</accession>
<gene>
    <name evidence="5" type="primary">HAL3</name>
    <name evidence="11" type="ordered locus">Os06g0199500</name>
    <name evidence="6" type="ordered locus">LOC_Os06g09910</name>
    <name evidence="10" type="ORF">B1172G12.27-1</name>
    <name evidence="9" type="ORF">OJ1147_D11.5-1</name>
    <name evidence="12" type="ORF">OsJ_20467</name>
</gene>
<comment type="function">
    <text evidence="2 3 4">Catalyzes the decarboxylation of 4'-phosphopantothenoylcysteine to 4'-phosphopantetheine, a key step in coenzyme A biosynthesis (PubMed:19232050, PubMed:19543273). Involved in salt and osmotic tolerance, and light-regulated plant growth (PubMed:19543273). Trimerization of HAL3 recruits and activates the E3 ubiquitin-protein ligase HIP1, which leads to the degradation of cell cycle suppressors, resulting in enhancement of cell division and plant growth (PubMed:19543273). HAL3 function in cell division seems to be independent from its PPC decarboxylase activity (PubMed:19543273). Acts as a positive regulator of flowering by binding to HD1 in the dark (PubMed:26537047).</text>
</comment>
<comment type="catalytic activity">
    <reaction evidence="3">
        <text>N-[(R)-4-phosphopantothenoyl]-L-cysteine + H(+) = (R)-4'-phosphopantetheine + CO2</text>
        <dbReference type="Rhea" id="RHEA:16793"/>
        <dbReference type="ChEBI" id="CHEBI:15378"/>
        <dbReference type="ChEBI" id="CHEBI:16526"/>
        <dbReference type="ChEBI" id="CHEBI:59458"/>
        <dbReference type="ChEBI" id="CHEBI:61723"/>
        <dbReference type="EC" id="4.1.1.36"/>
    </reaction>
    <physiologicalReaction direction="left-to-right" evidence="3">
        <dbReference type="Rhea" id="RHEA:16794"/>
    </physiologicalReaction>
</comment>
<comment type="cofactor">
    <cofactor evidence="8">
        <name>FMN</name>
        <dbReference type="ChEBI" id="CHEBI:58210"/>
    </cofactor>
    <text evidence="8">Binds 1 FMN per subunit.</text>
</comment>
<comment type="pathway">
    <text evidence="6">Cofactor biosynthesis; coenzyme A biosynthesis; CoA from (R)-pantothenate: step 3/5.</text>
</comment>
<comment type="subunit">
    <text evidence="3 4">Forms homotrimers (PubMed:19543273). Interacts with HIP1 (PubMed:19543273). Interacts with HD1 in the dark (PubMed:26537047).</text>
</comment>
<comment type="subcellular location">
    <subcellularLocation>
        <location evidence="4">Nucleus</location>
    </subcellularLocation>
</comment>
<comment type="tissue specificity">
    <text evidence="3">Expressed in root meristem, shoot apical meristem (SAM), intercalary meristem, floral meristem, embryo and tip of the coleoptile before true leaf emergence.</text>
</comment>
<comment type="induction">
    <text evidence="3">Induced by dark.</text>
</comment>
<comment type="miscellaneous">
    <text evidence="8">Seedlings over-expressing HAL3 show enhanced growth rate under normal light/dark cycles, enhanced salt tolerance and Na(+)/K(+) homeostasis. Enhanced growth is due to increased cell number of root meristematic zone and root cap (PubMed:19543273).</text>
</comment>
<comment type="similarity">
    <text evidence="6">Belongs to the HFCD (homooligomeric flavin containing Cys decarboxylase) superfamily.</text>
</comment>
<reference key="1">
    <citation type="journal article" date="2005" name="Nature">
        <title>The map-based sequence of the rice genome.</title>
        <authorList>
            <consortium name="International rice genome sequencing project (IRGSP)"/>
        </authorList>
    </citation>
    <scope>NUCLEOTIDE SEQUENCE [LARGE SCALE GENOMIC DNA]</scope>
    <source>
        <strain>cv. Nipponbare</strain>
    </source>
</reference>
<reference key="2">
    <citation type="journal article" date="2008" name="Nucleic Acids Res.">
        <title>The rice annotation project database (RAP-DB): 2008 update.</title>
        <authorList>
            <consortium name="The rice annotation project (RAP)"/>
        </authorList>
    </citation>
    <scope>GENOME REANNOTATION</scope>
    <source>
        <strain>cv. Nipponbare</strain>
    </source>
</reference>
<reference key="3">
    <citation type="journal article" date="2013" name="Rice">
        <title>Improvement of the Oryza sativa Nipponbare reference genome using next generation sequence and optical map data.</title>
        <authorList>
            <person name="Kawahara Y."/>
            <person name="de la Bastide M."/>
            <person name="Hamilton J.P."/>
            <person name="Kanamori H."/>
            <person name="McCombie W.R."/>
            <person name="Ouyang S."/>
            <person name="Schwartz D.C."/>
            <person name="Tanaka T."/>
            <person name="Wu J."/>
            <person name="Zhou S."/>
            <person name="Childs K.L."/>
            <person name="Davidson R.M."/>
            <person name="Lin H."/>
            <person name="Quesada-Ocampo L."/>
            <person name="Vaillancourt B."/>
            <person name="Sakai H."/>
            <person name="Lee S.S."/>
            <person name="Kim J."/>
            <person name="Numa H."/>
            <person name="Itoh T."/>
            <person name="Buell C.R."/>
            <person name="Matsumoto T."/>
        </authorList>
    </citation>
    <scope>GENOME REANNOTATION</scope>
    <source>
        <strain>cv. Nipponbare</strain>
    </source>
</reference>
<reference key="4">
    <citation type="journal article" date="2005" name="PLoS Biol.">
        <title>The genomes of Oryza sativa: a history of duplications.</title>
        <authorList>
            <person name="Yu J."/>
            <person name="Wang J."/>
            <person name="Lin W."/>
            <person name="Li S."/>
            <person name="Li H."/>
            <person name="Zhou J."/>
            <person name="Ni P."/>
            <person name="Dong W."/>
            <person name="Hu S."/>
            <person name="Zeng C."/>
            <person name="Zhang J."/>
            <person name="Zhang Y."/>
            <person name="Li R."/>
            <person name="Xu Z."/>
            <person name="Li S."/>
            <person name="Li X."/>
            <person name="Zheng H."/>
            <person name="Cong L."/>
            <person name="Lin L."/>
            <person name="Yin J."/>
            <person name="Geng J."/>
            <person name="Li G."/>
            <person name="Shi J."/>
            <person name="Liu J."/>
            <person name="Lv H."/>
            <person name="Li J."/>
            <person name="Wang J."/>
            <person name="Deng Y."/>
            <person name="Ran L."/>
            <person name="Shi X."/>
            <person name="Wang X."/>
            <person name="Wu Q."/>
            <person name="Li C."/>
            <person name="Ren X."/>
            <person name="Wang J."/>
            <person name="Wang X."/>
            <person name="Li D."/>
            <person name="Liu D."/>
            <person name="Zhang X."/>
            <person name="Ji Z."/>
            <person name="Zhao W."/>
            <person name="Sun Y."/>
            <person name="Zhang Z."/>
            <person name="Bao J."/>
            <person name="Han Y."/>
            <person name="Dong L."/>
            <person name="Ji J."/>
            <person name="Chen P."/>
            <person name="Wu S."/>
            <person name="Liu J."/>
            <person name="Xiao Y."/>
            <person name="Bu D."/>
            <person name="Tan J."/>
            <person name="Yang L."/>
            <person name="Ye C."/>
            <person name="Zhang J."/>
            <person name="Xu J."/>
            <person name="Zhou Y."/>
            <person name="Yu Y."/>
            <person name="Zhang B."/>
            <person name="Zhuang S."/>
            <person name="Wei H."/>
            <person name="Liu B."/>
            <person name="Lei M."/>
            <person name="Yu H."/>
            <person name="Li Y."/>
            <person name="Xu H."/>
            <person name="Wei S."/>
            <person name="He X."/>
            <person name="Fang L."/>
            <person name="Zhang Z."/>
            <person name="Zhang Y."/>
            <person name="Huang X."/>
            <person name="Su Z."/>
            <person name="Tong W."/>
            <person name="Li J."/>
            <person name="Tong Z."/>
            <person name="Li S."/>
            <person name="Ye J."/>
            <person name="Wang L."/>
            <person name="Fang L."/>
            <person name="Lei T."/>
            <person name="Chen C.-S."/>
            <person name="Chen H.-C."/>
            <person name="Xu Z."/>
            <person name="Li H."/>
            <person name="Huang H."/>
            <person name="Zhang F."/>
            <person name="Xu H."/>
            <person name="Li N."/>
            <person name="Zhao C."/>
            <person name="Li S."/>
            <person name="Dong L."/>
            <person name="Huang Y."/>
            <person name="Li L."/>
            <person name="Xi Y."/>
            <person name="Qi Q."/>
            <person name="Li W."/>
            <person name="Zhang B."/>
            <person name="Hu W."/>
            <person name="Zhang Y."/>
            <person name="Tian X."/>
            <person name="Jiao Y."/>
            <person name="Liang X."/>
            <person name="Jin J."/>
            <person name="Gao L."/>
            <person name="Zheng W."/>
            <person name="Hao B."/>
            <person name="Liu S.-M."/>
            <person name="Wang W."/>
            <person name="Yuan L."/>
            <person name="Cao M."/>
            <person name="McDermott J."/>
            <person name="Samudrala R."/>
            <person name="Wang J."/>
            <person name="Wong G.K.-S."/>
            <person name="Yang H."/>
        </authorList>
    </citation>
    <scope>NUCLEOTIDE SEQUENCE [LARGE SCALE GENOMIC DNA]</scope>
    <source>
        <strain>cv. Nipponbare</strain>
    </source>
</reference>
<reference key="5">
    <citation type="journal article" date="2003" name="Science">
        <title>Collection, mapping, and annotation of over 28,000 cDNA clones from japonica rice.</title>
        <authorList>
            <consortium name="The rice full-length cDNA consortium"/>
        </authorList>
    </citation>
    <scope>NUCLEOTIDE SEQUENCE [LARGE SCALE MRNA]</scope>
    <source>
        <strain>cv. Nipponbare</strain>
    </source>
</reference>
<reference key="6">
    <citation type="journal article" date="2009" name="Biochemistry (Mosc.)">
        <title>Role of OsHAL3 protein, a putative 4'-phosphopantothenoylcysteine decarboxylase in rice.</title>
        <authorList>
            <person name="Zhang N."/>
            <person name="Wang X."/>
            <person name="Chen J."/>
        </authorList>
    </citation>
    <scope>FUNCTION</scope>
    <scope>ACTIVE SITE</scope>
    <scope>MUTAGENESIS OF MET-146; CYS-176; ASP-178 AND GLY-180</scope>
</reference>
<reference key="7">
    <citation type="journal article" date="2009" name="Nat. Cell Biol.">
        <title>OsHAL3 mediates a new pathway in the light-regulated growth of rice.</title>
        <authorList>
            <person name="Sun S.Y."/>
            <person name="Chao D.Y."/>
            <person name="Li X.M."/>
            <person name="Shi M."/>
            <person name="Gao J.P."/>
            <person name="Zhu M.Z."/>
            <person name="Yang H.Q."/>
            <person name="Luan S."/>
            <person name="Lin H.X."/>
        </authorList>
    </citation>
    <scope>FUNCTION</scope>
    <scope>CATALYTIC ACTIVITY</scope>
    <scope>COFACTOR</scope>
    <scope>ACTIVE SITE</scope>
    <scope>SUBUNIT</scope>
    <scope>INTERACTION WITH HIP1</scope>
    <scope>TISSUE SPECIFICITY</scope>
    <scope>INDUCTION</scope>
    <scope>MUTAGENESIS OF 107-SER--TYR-110 AND CYS-176</scope>
</reference>
<reference key="8">
    <citation type="journal article" date="2016" name="Mol. Plant">
        <title>OsHAL3, a blue light-responsive protein, interacts with the floral regulator Hd1 to activate flowering in rice.</title>
        <authorList>
            <person name="Su L."/>
            <person name="Shan J.X."/>
            <person name="Gao J.P."/>
            <person name="Lin H.X."/>
        </authorList>
    </citation>
    <scope>FUNCTION</scope>
    <scope>INTERACTION WITH HD1</scope>
    <scope>SUBCELLULAR LOCATION</scope>
</reference>